<evidence type="ECO:0000255" key="1">
    <source>
        <dbReference type="HAMAP-Rule" id="MF_00380"/>
    </source>
</evidence>
<evidence type="ECO:0000256" key="2">
    <source>
        <dbReference type="SAM" id="MobiDB-lite"/>
    </source>
</evidence>
<sequence length="98" mass="11220">MALTKAEMSENLFEKLGISKRDAKDLVELFFEEVRRSLENGEQVKLSGFGNFDLRDKNQRPGRNPKTGEDIPITARRVVTFRPGQKLKSRVEKATPKE</sequence>
<keyword id="KW-0233">DNA recombination</keyword>
<keyword id="KW-0238">DNA-binding</keyword>
<keyword id="KW-1185">Reference proteome</keyword>
<keyword id="KW-0804">Transcription</keyword>
<keyword id="KW-0805">Transcription regulation</keyword>
<keyword id="KW-0810">Translation regulation</keyword>
<name>IHFA_PHOLL</name>
<proteinExistence type="inferred from homology"/>
<reference key="1">
    <citation type="journal article" date="2003" name="Nat. Biotechnol.">
        <title>The genome sequence of the entomopathogenic bacterium Photorhabdus luminescens.</title>
        <authorList>
            <person name="Duchaud E."/>
            <person name="Rusniok C."/>
            <person name="Frangeul L."/>
            <person name="Buchrieser C."/>
            <person name="Givaudan A."/>
            <person name="Taourit S."/>
            <person name="Bocs S."/>
            <person name="Boursaux-Eude C."/>
            <person name="Chandler M."/>
            <person name="Charles J.-F."/>
            <person name="Dassa E."/>
            <person name="Derose R."/>
            <person name="Derzelle S."/>
            <person name="Freyssinet G."/>
            <person name="Gaudriault S."/>
            <person name="Medigue C."/>
            <person name="Lanois A."/>
            <person name="Powell K."/>
            <person name="Siguier P."/>
            <person name="Vincent R."/>
            <person name="Wingate V."/>
            <person name="Zouine M."/>
            <person name="Glaser P."/>
            <person name="Boemare N."/>
            <person name="Danchin A."/>
            <person name="Kunst F."/>
        </authorList>
    </citation>
    <scope>NUCLEOTIDE SEQUENCE [LARGE SCALE GENOMIC DNA]</scope>
    <source>
        <strain>DSM 15139 / CIP 105565 / TT01</strain>
    </source>
</reference>
<feature type="chain" id="PRO_0000277752" description="Integration host factor subunit alpha">
    <location>
        <begin position="1"/>
        <end position="98"/>
    </location>
</feature>
<feature type="region of interest" description="Disordered" evidence="2">
    <location>
        <begin position="52"/>
        <end position="71"/>
    </location>
</feature>
<dbReference type="EMBL" id="BX571867">
    <property type="protein sequence ID" value="CAE15037.1"/>
    <property type="molecule type" value="Genomic_DNA"/>
</dbReference>
<dbReference type="RefSeq" id="WP_011146885.1">
    <property type="nucleotide sequence ID" value="NC_005126.1"/>
</dbReference>
<dbReference type="SMR" id="Q7N3Q2"/>
<dbReference type="STRING" id="243265.plu2663"/>
<dbReference type="GeneID" id="88804624"/>
<dbReference type="KEGG" id="plu:plu2663"/>
<dbReference type="eggNOG" id="COG0776">
    <property type="taxonomic scope" value="Bacteria"/>
</dbReference>
<dbReference type="HOGENOM" id="CLU_105066_1_3_6"/>
<dbReference type="OrthoDB" id="9797747at2"/>
<dbReference type="Proteomes" id="UP000002514">
    <property type="component" value="Chromosome"/>
</dbReference>
<dbReference type="GO" id="GO:0005829">
    <property type="term" value="C:cytosol"/>
    <property type="evidence" value="ECO:0007669"/>
    <property type="project" value="TreeGrafter"/>
</dbReference>
<dbReference type="GO" id="GO:0003677">
    <property type="term" value="F:DNA binding"/>
    <property type="evidence" value="ECO:0007669"/>
    <property type="project" value="UniProtKB-UniRule"/>
</dbReference>
<dbReference type="GO" id="GO:0030527">
    <property type="term" value="F:structural constituent of chromatin"/>
    <property type="evidence" value="ECO:0007669"/>
    <property type="project" value="InterPro"/>
</dbReference>
<dbReference type="GO" id="GO:0006310">
    <property type="term" value="P:DNA recombination"/>
    <property type="evidence" value="ECO:0007669"/>
    <property type="project" value="UniProtKB-UniRule"/>
</dbReference>
<dbReference type="GO" id="GO:0009893">
    <property type="term" value="P:positive regulation of metabolic process"/>
    <property type="evidence" value="ECO:0007669"/>
    <property type="project" value="UniProtKB-ARBA"/>
</dbReference>
<dbReference type="GO" id="GO:0006355">
    <property type="term" value="P:regulation of DNA-templated transcription"/>
    <property type="evidence" value="ECO:0007669"/>
    <property type="project" value="UniProtKB-UniRule"/>
</dbReference>
<dbReference type="GO" id="GO:0006417">
    <property type="term" value="P:regulation of translation"/>
    <property type="evidence" value="ECO:0007669"/>
    <property type="project" value="UniProtKB-UniRule"/>
</dbReference>
<dbReference type="CDD" id="cd13835">
    <property type="entry name" value="IHF_A"/>
    <property type="match status" value="1"/>
</dbReference>
<dbReference type="FunFam" id="4.10.520.10:FF:000002">
    <property type="entry name" value="Integration host factor subunit alpha"/>
    <property type="match status" value="1"/>
</dbReference>
<dbReference type="Gene3D" id="4.10.520.10">
    <property type="entry name" value="IHF-like DNA-binding proteins"/>
    <property type="match status" value="1"/>
</dbReference>
<dbReference type="HAMAP" id="MF_00380">
    <property type="entry name" value="IHF_alpha"/>
    <property type="match status" value="1"/>
</dbReference>
<dbReference type="InterPro" id="IPR000119">
    <property type="entry name" value="Hist_DNA-bd"/>
</dbReference>
<dbReference type="InterPro" id="IPR020816">
    <property type="entry name" value="Histone-like_DNA-bd_CS"/>
</dbReference>
<dbReference type="InterPro" id="IPR010992">
    <property type="entry name" value="IHF-like_DNA-bd_dom_sf"/>
</dbReference>
<dbReference type="InterPro" id="IPR005684">
    <property type="entry name" value="IHF_alpha"/>
</dbReference>
<dbReference type="NCBIfam" id="TIGR00987">
    <property type="entry name" value="himA"/>
    <property type="match status" value="1"/>
</dbReference>
<dbReference type="NCBIfam" id="NF001401">
    <property type="entry name" value="PRK00285.1"/>
    <property type="match status" value="1"/>
</dbReference>
<dbReference type="PANTHER" id="PTHR33175">
    <property type="entry name" value="DNA-BINDING PROTEIN HU"/>
    <property type="match status" value="1"/>
</dbReference>
<dbReference type="PANTHER" id="PTHR33175:SF2">
    <property type="entry name" value="INTEGRATION HOST FACTOR SUBUNIT ALPHA"/>
    <property type="match status" value="1"/>
</dbReference>
<dbReference type="Pfam" id="PF00216">
    <property type="entry name" value="Bac_DNA_binding"/>
    <property type="match status" value="1"/>
</dbReference>
<dbReference type="PRINTS" id="PR01727">
    <property type="entry name" value="DNABINDINGHU"/>
</dbReference>
<dbReference type="SMART" id="SM00411">
    <property type="entry name" value="BHL"/>
    <property type="match status" value="1"/>
</dbReference>
<dbReference type="SUPFAM" id="SSF47729">
    <property type="entry name" value="IHF-like DNA-binding proteins"/>
    <property type="match status" value="1"/>
</dbReference>
<dbReference type="PROSITE" id="PS00045">
    <property type="entry name" value="HISTONE_LIKE"/>
    <property type="match status" value="1"/>
</dbReference>
<organism>
    <name type="scientific">Photorhabdus laumondii subsp. laumondii (strain DSM 15139 / CIP 105565 / TT01)</name>
    <name type="common">Photorhabdus luminescens subsp. laumondii</name>
    <dbReference type="NCBI Taxonomy" id="243265"/>
    <lineage>
        <taxon>Bacteria</taxon>
        <taxon>Pseudomonadati</taxon>
        <taxon>Pseudomonadota</taxon>
        <taxon>Gammaproteobacteria</taxon>
        <taxon>Enterobacterales</taxon>
        <taxon>Morganellaceae</taxon>
        <taxon>Photorhabdus</taxon>
    </lineage>
</organism>
<protein>
    <recommendedName>
        <fullName evidence="1">Integration host factor subunit alpha</fullName>
        <shortName evidence="1">IHF-alpha</shortName>
    </recommendedName>
</protein>
<gene>
    <name evidence="1" type="primary">ihfA</name>
    <name evidence="1" type="synonym">himA</name>
    <name type="ordered locus">plu2663</name>
</gene>
<accession>Q7N3Q2</accession>
<comment type="function">
    <text evidence="1">This protein is one of the two subunits of integration host factor, a specific DNA-binding protein that functions in genetic recombination as well as in transcriptional and translational control.</text>
</comment>
<comment type="subunit">
    <text evidence="1">Heterodimer of an alpha and a beta chain.</text>
</comment>
<comment type="similarity">
    <text evidence="1">Belongs to the bacterial histone-like protein family.</text>
</comment>